<reference key="1">
    <citation type="submission" date="1994-03" db="EMBL/GenBank/DDBJ databases">
        <authorList>
            <person name="Smith D.R."/>
            <person name="Robison K."/>
        </authorList>
    </citation>
    <scope>NUCLEOTIDE SEQUENCE [GENOMIC DNA]</scope>
</reference>
<reference key="2">
    <citation type="journal article" date="2001" name="Nature">
        <title>Massive gene decay in the leprosy bacillus.</title>
        <authorList>
            <person name="Cole S.T."/>
            <person name="Eiglmeier K."/>
            <person name="Parkhill J."/>
            <person name="James K.D."/>
            <person name="Thomson N.R."/>
            <person name="Wheeler P.R."/>
            <person name="Honore N."/>
            <person name="Garnier T."/>
            <person name="Churcher C.M."/>
            <person name="Harris D.E."/>
            <person name="Mungall K.L."/>
            <person name="Basham D."/>
            <person name="Brown D."/>
            <person name="Chillingworth T."/>
            <person name="Connor R."/>
            <person name="Davies R.M."/>
            <person name="Devlin K."/>
            <person name="Duthoy S."/>
            <person name="Feltwell T."/>
            <person name="Fraser A."/>
            <person name="Hamlin N."/>
            <person name="Holroyd S."/>
            <person name="Hornsby T."/>
            <person name="Jagels K."/>
            <person name="Lacroix C."/>
            <person name="Maclean J."/>
            <person name="Moule S."/>
            <person name="Murphy L.D."/>
            <person name="Oliver K."/>
            <person name="Quail M.A."/>
            <person name="Rajandream M.A."/>
            <person name="Rutherford K.M."/>
            <person name="Rutter S."/>
            <person name="Seeger K."/>
            <person name="Simon S."/>
            <person name="Simmonds M."/>
            <person name="Skelton J."/>
            <person name="Squares R."/>
            <person name="Squares S."/>
            <person name="Stevens K."/>
            <person name="Taylor K."/>
            <person name="Whitehead S."/>
            <person name="Woodward J.R."/>
            <person name="Barrell B.G."/>
        </authorList>
    </citation>
    <scope>NUCLEOTIDE SEQUENCE [LARGE SCALE GENOMIC DNA]</scope>
    <source>
        <strain>TN</strain>
    </source>
</reference>
<proteinExistence type="inferred from homology"/>
<dbReference type="EC" id="1.5.1.2" evidence="1"/>
<dbReference type="EMBL" id="U00018">
    <property type="protein sequence ID" value="AAA17233.1"/>
    <property type="molecule type" value="Genomic_DNA"/>
</dbReference>
<dbReference type="EMBL" id="AL583925">
    <property type="protein sequence ID" value="CAC31947.1"/>
    <property type="molecule type" value="Genomic_DNA"/>
</dbReference>
<dbReference type="PIR" id="S72897">
    <property type="entry name" value="S72897"/>
</dbReference>
<dbReference type="RefSeq" id="NP_302575.1">
    <property type="nucleotide sequence ID" value="NC_002677.1"/>
</dbReference>
<dbReference type="SMR" id="P46725"/>
<dbReference type="STRING" id="272631.gene:17576293"/>
<dbReference type="KEGG" id="mle:ML2430"/>
<dbReference type="PATRIC" id="fig|272631.5.peg.4669"/>
<dbReference type="Leproma" id="ML2430"/>
<dbReference type="eggNOG" id="COG0345">
    <property type="taxonomic scope" value="Bacteria"/>
</dbReference>
<dbReference type="HOGENOM" id="CLU_042344_0_0_11"/>
<dbReference type="OrthoDB" id="9805754at2"/>
<dbReference type="UniPathway" id="UPA00098">
    <property type="reaction ID" value="UER00361"/>
</dbReference>
<dbReference type="Proteomes" id="UP000000806">
    <property type="component" value="Chromosome"/>
</dbReference>
<dbReference type="GO" id="GO:0005737">
    <property type="term" value="C:cytoplasm"/>
    <property type="evidence" value="ECO:0007669"/>
    <property type="project" value="UniProtKB-SubCell"/>
</dbReference>
<dbReference type="GO" id="GO:0004735">
    <property type="term" value="F:pyrroline-5-carboxylate reductase activity"/>
    <property type="evidence" value="ECO:0007669"/>
    <property type="project" value="UniProtKB-UniRule"/>
</dbReference>
<dbReference type="GO" id="GO:0055129">
    <property type="term" value="P:L-proline biosynthetic process"/>
    <property type="evidence" value="ECO:0007669"/>
    <property type="project" value="UniProtKB-UniRule"/>
</dbReference>
<dbReference type="FunFam" id="1.10.3730.10:FF:000001">
    <property type="entry name" value="Pyrroline-5-carboxylate reductase"/>
    <property type="match status" value="1"/>
</dbReference>
<dbReference type="Gene3D" id="3.40.50.720">
    <property type="entry name" value="NAD(P)-binding Rossmann-like Domain"/>
    <property type="match status" value="1"/>
</dbReference>
<dbReference type="Gene3D" id="1.10.3730.10">
    <property type="entry name" value="ProC C-terminal domain-like"/>
    <property type="match status" value="1"/>
</dbReference>
<dbReference type="HAMAP" id="MF_01925">
    <property type="entry name" value="P5C_reductase"/>
    <property type="match status" value="1"/>
</dbReference>
<dbReference type="InterPro" id="IPR008927">
    <property type="entry name" value="6-PGluconate_DH-like_C_sf"/>
</dbReference>
<dbReference type="InterPro" id="IPR036291">
    <property type="entry name" value="NAD(P)-bd_dom_sf"/>
</dbReference>
<dbReference type="InterPro" id="IPR028939">
    <property type="entry name" value="P5C_Rdtase_cat_N"/>
</dbReference>
<dbReference type="InterPro" id="IPR053790">
    <property type="entry name" value="P5CR-like_CS"/>
</dbReference>
<dbReference type="InterPro" id="IPR029036">
    <property type="entry name" value="P5CR_dimer"/>
</dbReference>
<dbReference type="InterPro" id="IPR000304">
    <property type="entry name" value="Pyrroline-COOH_reductase"/>
</dbReference>
<dbReference type="NCBIfam" id="TIGR00112">
    <property type="entry name" value="proC"/>
    <property type="match status" value="1"/>
</dbReference>
<dbReference type="PANTHER" id="PTHR11645">
    <property type="entry name" value="PYRROLINE-5-CARBOXYLATE REDUCTASE"/>
    <property type="match status" value="1"/>
</dbReference>
<dbReference type="PANTHER" id="PTHR11645:SF0">
    <property type="entry name" value="PYRROLINE-5-CARBOXYLATE REDUCTASE 3"/>
    <property type="match status" value="1"/>
</dbReference>
<dbReference type="Pfam" id="PF03807">
    <property type="entry name" value="F420_oxidored"/>
    <property type="match status" value="1"/>
</dbReference>
<dbReference type="Pfam" id="PF14748">
    <property type="entry name" value="P5CR_dimer"/>
    <property type="match status" value="1"/>
</dbReference>
<dbReference type="PIRSF" id="PIRSF000193">
    <property type="entry name" value="Pyrrol-5-carb_rd"/>
    <property type="match status" value="1"/>
</dbReference>
<dbReference type="SUPFAM" id="SSF48179">
    <property type="entry name" value="6-phosphogluconate dehydrogenase C-terminal domain-like"/>
    <property type="match status" value="1"/>
</dbReference>
<dbReference type="SUPFAM" id="SSF51735">
    <property type="entry name" value="NAD(P)-binding Rossmann-fold domains"/>
    <property type="match status" value="1"/>
</dbReference>
<dbReference type="PROSITE" id="PS00521">
    <property type="entry name" value="P5CR"/>
    <property type="match status" value="1"/>
</dbReference>
<feature type="chain" id="PRO_0000187293" description="Pyrroline-5-carboxylate reductase">
    <location>
        <begin position="1"/>
        <end position="294"/>
    </location>
</feature>
<keyword id="KW-0028">Amino-acid biosynthesis</keyword>
<keyword id="KW-0963">Cytoplasm</keyword>
<keyword id="KW-0521">NADP</keyword>
<keyword id="KW-0560">Oxidoreductase</keyword>
<keyword id="KW-0641">Proline biosynthesis</keyword>
<keyword id="KW-1185">Reference proteome</keyword>
<organism>
    <name type="scientific">Mycobacterium leprae (strain TN)</name>
    <dbReference type="NCBI Taxonomy" id="272631"/>
    <lineage>
        <taxon>Bacteria</taxon>
        <taxon>Bacillati</taxon>
        <taxon>Actinomycetota</taxon>
        <taxon>Actinomycetes</taxon>
        <taxon>Mycobacteriales</taxon>
        <taxon>Mycobacteriaceae</taxon>
        <taxon>Mycobacterium</taxon>
    </lineage>
</organism>
<accession>P46725</accession>
<gene>
    <name evidence="1" type="primary">proC</name>
    <name type="ordered locus">ML2430</name>
    <name type="ORF">B2168_C2_211</name>
</gene>
<sequence>MLSSMARIAIIGGGSIGEALLSGLLRAGRQVKDLVVAERMPDRARYLADTYSVLVTSVTDAVENAMFVVVAVKPTDVESVMGDLVQAAAVANDSAEQVLVTVAAGVTITYLESKLPAGTPVVRAMPNAAALVGAGVTVLAKGRFVTGQQFEDVLAMFDAVGGVLTVPESQMDAVTAVSGSGPAYFFLLVEALVDAGVAVGLTRQVATELAAQTMAGSAAMLLERMDQDRHSAEVAPLGAQVDVPAAQLRATITSPGGTTAAALRELERGGLRMVVDAAVQAAKIRSEQLRITSE</sequence>
<name>P5CR_MYCLE</name>
<protein>
    <recommendedName>
        <fullName evidence="1">Pyrroline-5-carboxylate reductase</fullName>
        <shortName evidence="1">P5C reductase</shortName>
        <shortName evidence="1">P5CR</shortName>
        <ecNumber evidence="1">1.5.1.2</ecNumber>
    </recommendedName>
    <alternativeName>
        <fullName evidence="1">PCA reductase</fullName>
    </alternativeName>
</protein>
<evidence type="ECO:0000255" key="1">
    <source>
        <dbReference type="HAMAP-Rule" id="MF_01925"/>
    </source>
</evidence>
<comment type="function">
    <text evidence="1">Catalyzes the reduction of 1-pyrroline-5-carboxylate (PCA) to L-proline.</text>
</comment>
<comment type="catalytic activity">
    <reaction evidence="1">
        <text>L-proline + NADP(+) = (S)-1-pyrroline-5-carboxylate + NADPH + 2 H(+)</text>
        <dbReference type="Rhea" id="RHEA:14109"/>
        <dbReference type="ChEBI" id="CHEBI:15378"/>
        <dbReference type="ChEBI" id="CHEBI:17388"/>
        <dbReference type="ChEBI" id="CHEBI:57783"/>
        <dbReference type="ChEBI" id="CHEBI:58349"/>
        <dbReference type="ChEBI" id="CHEBI:60039"/>
        <dbReference type="EC" id="1.5.1.2"/>
    </reaction>
</comment>
<comment type="catalytic activity">
    <reaction evidence="1">
        <text>L-proline + NAD(+) = (S)-1-pyrroline-5-carboxylate + NADH + 2 H(+)</text>
        <dbReference type="Rhea" id="RHEA:14105"/>
        <dbReference type="ChEBI" id="CHEBI:15378"/>
        <dbReference type="ChEBI" id="CHEBI:17388"/>
        <dbReference type="ChEBI" id="CHEBI:57540"/>
        <dbReference type="ChEBI" id="CHEBI:57945"/>
        <dbReference type="ChEBI" id="CHEBI:60039"/>
        <dbReference type="EC" id="1.5.1.2"/>
    </reaction>
</comment>
<comment type="pathway">
    <text evidence="1">Amino-acid biosynthesis; L-proline biosynthesis; L-proline from L-glutamate 5-semialdehyde: step 1/1.</text>
</comment>
<comment type="subcellular location">
    <subcellularLocation>
        <location evidence="1">Cytoplasm</location>
    </subcellularLocation>
</comment>
<comment type="similarity">
    <text evidence="1">Belongs to the pyrroline-5-carboxylate reductase family.</text>
</comment>